<sequence length="519" mass="58495">MAGYKPVSIQTYPVLGEKITQDTLYWNNYKTPVQIKEFGAVSKVDFSPQPPYNYAVTASSRIHIYGRYSQEPIKTFSRFKDTAYCATFRQDGRLLVAGSEDGGVQLFDISGRAPLRQFEGHTKAVHSVDFTADKYHVVSGADDYTVKLWDIPNSKEILTFKEHSDYVRCGCASKLNTDLFVTGSYDHTVKMFDARTNQSVISVEHGQPVESVLLFPSGGLLVSAGGRYVKVWDMLKGGQLLVSLKNHHKTVTCLCLSSSGQRLLSGSLDRKVKVYSTTSYKVVHSFDYTASILSLALAHEDETIVVGMTNGILSVKHRKSEAKKDSVPRRRRPAYRTFIKGKNYMKQQDDILINRPSKKHLELYDRDLKNFRISKALDRVLEPTCTIKTPEVTVSIIKELNRRGVLANALAGRDEKEISRVLNFLIRNLSQPRFAPVLINAAEIIIDIYLPVIGQSPVVDKKFLILQGLVEKEIDYQRELLETLGMMDMLFATMTRKESTSVLQHNTSDGFLENNKIES</sequence>
<name>UTP15_BOVIN</name>
<accession>A7MB12</accession>
<dbReference type="EMBL" id="BC151279">
    <property type="protein sequence ID" value="AAI51280.1"/>
    <property type="molecule type" value="mRNA"/>
</dbReference>
<dbReference type="RefSeq" id="NP_001094598.1">
    <property type="nucleotide sequence ID" value="NM_001101128.2"/>
</dbReference>
<dbReference type="SMR" id="A7MB12"/>
<dbReference type="FunCoup" id="A7MB12">
    <property type="interactions" value="3417"/>
</dbReference>
<dbReference type="STRING" id="9913.ENSBTAP00000036690"/>
<dbReference type="PaxDb" id="9913-ENSBTAP00000036690"/>
<dbReference type="Ensembl" id="ENSBTAT00000036838.4">
    <property type="protein sequence ID" value="ENSBTAP00000036690.3"/>
    <property type="gene ID" value="ENSBTAG00000006843.5"/>
</dbReference>
<dbReference type="GeneID" id="526343"/>
<dbReference type="KEGG" id="bta:526343"/>
<dbReference type="CTD" id="84135"/>
<dbReference type="VEuPathDB" id="HostDB:ENSBTAG00000006843"/>
<dbReference type="VGNC" id="VGNC:36742">
    <property type="gene designation" value="UTP15"/>
</dbReference>
<dbReference type="eggNOG" id="KOG0267">
    <property type="taxonomic scope" value="Eukaryota"/>
</dbReference>
<dbReference type="eggNOG" id="KOG0310">
    <property type="taxonomic scope" value="Eukaryota"/>
</dbReference>
<dbReference type="GeneTree" id="ENSGT00390000004228"/>
<dbReference type="HOGENOM" id="CLU_021102_4_1_1"/>
<dbReference type="InParanoid" id="A7MB12"/>
<dbReference type="OMA" id="ATYQVVH"/>
<dbReference type="OrthoDB" id="431715at2759"/>
<dbReference type="TreeFam" id="TF319494"/>
<dbReference type="Reactome" id="R-BTA-6791226">
    <property type="pathway name" value="Major pathway of rRNA processing in the nucleolus and cytosol"/>
</dbReference>
<dbReference type="CD-CODE" id="D7FE2080">
    <property type="entry name" value="Nucleolus"/>
</dbReference>
<dbReference type="Proteomes" id="UP000009136">
    <property type="component" value="Chromosome 20"/>
</dbReference>
<dbReference type="Bgee" id="ENSBTAG00000006843">
    <property type="expression patterns" value="Expressed in conceptus and 105 other cell types or tissues"/>
</dbReference>
<dbReference type="GO" id="GO:0005783">
    <property type="term" value="C:endoplasmic reticulum"/>
    <property type="evidence" value="ECO:0007669"/>
    <property type="project" value="Ensembl"/>
</dbReference>
<dbReference type="GO" id="GO:0001650">
    <property type="term" value="C:fibrillar center"/>
    <property type="evidence" value="ECO:0000250"/>
    <property type="project" value="UniProtKB"/>
</dbReference>
<dbReference type="GO" id="GO:0005730">
    <property type="term" value="C:nucleolus"/>
    <property type="evidence" value="ECO:0000250"/>
    <property type="project" value="UniProtKB"/>
</dbReference>
<dbReference type="GO" id="GO:0032040">
    <property type="term" value="C:small-subunit processome"/>
    <property type="evidence" value="ECO:0000250"/>
    <property type="project" value="UniProtKB"/>
</dbReference>
<dbReference type="GO" id="GO:2000234">
    <property type="term" value="P:positive regulation of rRNA processing"/>
    <property type="evidence" value="ECO:0007669"/>
    <property type="project" value="Ensembl"/>
</dbReference>
<dbReference type="GO" id="GO:0045943">
    <property type="term" value="P:positive regulation of transcription by RNA polymerase I"/>
    <property type="evidence" value="ECO:0000318"/>
    <property type="project" value="GO_Central"/>
</dbReference>
<dbReference type="GO" id="GO:0042274">
    <property type="term" value="P:ribosomal small subunit biogenesis"/>
    <property type="evidence" value="ECO:0000250"/>
    <property type="project" value="UniProtKB"/>
</dbReference>
<dbReference type="GO" id="GO:0006364">
    <property type="term" value="P:rRNA processing"/>
    <property type="evidence" value="ECO:0000318"/>
    <property type="project" value="GO_Central"/>
</dbReference>
<dbReference type="CDD" id="cd00200">
    <property type="entry name" value="WD40"/>
    <property type="match status" value="1"/>
</dbReference>
<dbReference type="FunFam" id="2.130.10.10:FF:000398">
    <property type="entry name" value="U3 small nucleolar RNA-associated protein 15 homolog"/>
    <property type="match status" value="1"/>
</dbReference>
<dbReference type="FunFam" id="2.130.10.10:FF:000448">
    <property type="entry name" value="U3 small nucleolar RNA-associated protein 15 homolog"/>
    <property type="match status" value="1"/>
</dbReference>
<dbReference type="Gene3D" id="2.130.10.10">
    <property type="entry name" value="YVTN repeat-like/Quinoprotein amine dehydrogenase"/>
    <property type="match status" value="2"/>
</dbReference>
<dbReference type="InterPro" id="IPR018983">
    <property type="entry name" value="U3_snoRNA-assocProt_15_C"/>
</dbReference>
<dbReference type="InterPro" id="IPR015943">
    <property type="entry name" value="WD40/YVTN_repeat-like_dom_sf"/>
</dbReference>
<dbReference type="InterPro" id="IPR019775">
    <property type="entry name" value="WD40_repeat_CS"/>
</dbReference>
<dbReference type="InterPro" id="IPR036322">
    <property type="entry name" value="WD40_repeat_dom_sf"/>
</dbReference>
<dbReference type="InterPro" id="IPR001680">
    <property type="entry name" value="WD40_rpt"/>
</dbReference>
<dbReference type="PANTHER" id="PTHR19924:SF26">
    <property type="entry name" value="U3 SMALL NUCLEOLAR RNA-ASSOCIATED PROTEIN 15 HOMOLOG"/>
    <property type="match status" value="1"/>
</dbReference>
<dbReference type="PANTHER" id="PTHR19924">
    <property type="entry name" value="UTP15 U3 SMALL NUCLEOLAR RNA-ASSOCIATED PROTEIN 15 FAMILY MEMBER"/>
    <property type="match status" value="1"/>
</dbReference>
<dbReference type="Pfam" id="PF09384">
    <property type="entry name" value="UTP15_C"/>
    <property type="match status" value="1"/>
</dbReference>
<dbReference type="Pfam" id="PF00400">
    <property type="entry name" value="WD40"/>
    <property type="match status" value="5"/>
</dbReference>
<dbReference type="SMART" id="SM00320">
    <property type="entry name" value="WD40"/>
    <property type="match status" value="7"/>
</dbReference>
<dbReference type="SUPFAM" id="SSF50978">
    <property type="entry name" value="WD40 repeat-like"/>
    <property type="match status" value="1"/>
</dbReference>
<dbReference type="PROSITE" id="PS00678">
    <property type="entry name" value="WD_REPEATS_1"/>
    <property type="match status" value="1"/>
</dbReference>
<dbReference type="PROSITE" id="PS50082">
    <property type="entry name" value="WD_REPEATS_2"/>
    <property type="match status" value="2"/>
</dbReference>
<dbReference type="PROSITE" id="PS50294">
    <property type="entry name" value="WD_REPEATS_REGION"/>
    <property type="match status" value="1"/>
</dbReference>
<comment type="function">
    <text evidence="1">Ribosome biogenesis factor. Involved in nucleolar processing of pre-18S ribosomal RNA. Required for optimal pre-ribosomal RNA transcription by RNA polymerase I. Part of the small subunit (SSU) processome, first precursor of the small eukaryotic ribosomal subunit. During the assembly of the SSU processome in the nucleolus, many ribosome biogenesis factors, an RNA chaperone and ribosomal proteins associate with the nascent pre-rRNA and work in concert to generate RNA folding, modifications, rearrangements and cleavage as well as targeted degradation of pre-ribosomal RNA by the RNA exosome.</text>
</comment>
<comment type="subunit">
    <text evidence="1">Part of the small subunit (SSU) processome, composed of more than 70 proteins and the RNA chaperone small nucleolar RNA (snoRNA) U3. May be a component of the proposed t-UTP subcomplex of the ribosomal small subunit (SSU) processome containing at least UTP4, WDR43, HEATR1, UTP15, WDR75. Interacts directly with UTP4 and WDR43.</text>
</comment>
<comment type="subcellular location">
    <subcellularLocation>
        <location evidence="1">Nucleus</location>
        <location evidence="1">Nucleolus</location>
    </subcellularLocation>
    <text evidence="1">Found predominantly at the fibrillar center.</text>
</comment>
<evidence type="ECO:0000250" key="1">
    <source>
        <dbReference type="UniProtKB" id="Q8TED0"/>
    </source>
</evidence>
<evidence type="ECO:0000255" key="2"/>
<evidence type="ECO:0000312" key="3">
    <source>
        <dbReference type="EMBL" id="AAI51280.1"/>
    </source>
</evidence>
<reference evidence="3" key="1">
    <citation type="submission" date="2007-07" db="EMBL/GenBank/DDBJ databases">
        <authorList>
            <consortium name="NIH - Mammalian Gene Collection (MGC) project"/>
        </authorList>
    </citation>
    <scope>NUCLEOTIDE SEQUENCE [LARGE SCALE MRNA]</scope>
    <source>
        <strain evidence="3">Hereford</strain>
        <tissue evidence="3">Thymus</tissue>
    </source>
</reference>
<protein>
    <recommendedName>
        <fullName>U3 small nucleolar RNA-associated protein 15 homolog</fullName>
    </recommendedName>
</protein>
<gene>
    <name evidence="1" type="primary">UTP15</name>
</gene>
<proteinExistence type="evidence at transcript level"/>
<feature type="initiator methionine" description="Removed" evidence="1">
    <location>
        <position position="1"/>
    </location>
</feature>
<feature type="chain" id="PRO_0000314595" description="U3 small nucleolar RNA-associated protein 15 homolog">
    <location>
        <begin position="2"/>
        <end position="519"/>
    </location>
</feature>
<feature type="repeat" description="WD 1" evidence="2">
    <location>
        <begin position="36"/>
        <end position="75"/>
    </location>
</feature>
<feature type="repeat" description="WD 2" evidence="2">
    <location>
        <begin position="78"/>
        <end position="117"/>
    </location>
</feature>
<feature type="repeat" description="WD 3" evidence="2">
    <location>
        <begin position="120"/>
        <end position="159"/>
    </location>
</feature>
<feature type="repeat" description="WD 4" evidence="2">
    <location>
        <begin position="162"/>
        <end position="202"/>
    </location>
</feature>
<feature type="repeat" description="WD 5" evidence="2">
    <location>
        <begin position="204"/>
        <end position="242"/>
    </location>
</feature>
<feature type="repeat" description="WD 6" evidence="2">
    <location>
        <begin position="246"/>
        <end position="285"/>
    </location>
</feature>
<feature type="repeat" description="WD 7" evidence="2">
    <location>
        <begin position="287"/>
        <end position="326"/>
    </location>
</feature>
<feature type="modified residue" description="N-acetylalanine" evidence="1">
    <location>
        <position position="2"/>
    </location>
</feature>
<feature type="cross-link" description="Glycyl lysine isopeptide (Lys-Gly) (interchain with G-Cter in SUMO2)" evidence="1">
    <location>
        <position position="249"/>
    </location>
</feature>
<keyword id="KW-0007">Acetylation</keyword>
<keyword id="KW-1017">Isopeptide bond</keyword>
<keyword id="KW-0539">Nucleus</keyword>
<keyword id="KW-1185">Reference proteome</keyword>
<keyword id="KW-0677">Repeat</keyword>
<keyword id="KW-0690">Ribosome biogenesis</keyword>
<keyword id="KW-0698">rRNA processing</keyword>
<keyword id="KW-0804">Transcription</keyword>
<keyword id="KW-0805">Transcription regulation</keyword>
<keyword id="KW-0832">Ubl conjugation</keyword>
<keyword id="KW-0853">WD repeat</keyword>
<organism>
    <name type="scientific">Bos taurus</name>
    <name type="common">Bovine</name>
    <dbReference type="NCBI Taxonomy" id="9913"/>
    <lineage>
        <taxon>Eukaryota</taxon>
        <taxon>Metazoa</taxon>
        <taxon>Chordata</taxon>
        <taxon>Craniata</taxon>
        <taxon>Vertebrata</taxon>
        <taxon>Euteleostomi</taxon>
        <taxon>Mammalia</taxon>
        <taxon>Eutheria</taxon>
        <taxon>Laurasiatheria</taxon>
        <taxon>Artiodactyla</taxon>
        <taxon>Ruminantia</taxon>
        <taxon>Pecora</taxon>
        <taxon>Bovidae</taxon>
        <taxon>Bovinae</taxon>
        <taxon>Bos</taxon>
    </lineage>
</organism>